<evidence type="ECO:0000255" key="1">
    <source>
        <dbReference type="HAMAP-Rule" id="MF_01703"/>
    </source>
</evidence>
<dbReference type="EC" id="7.5.2.6" evidence="1"/>
<dbReference type="EMBL" id="AE017340">
    <property type="protein sequence ID" value="AAV82351.1"/>
    <property type="molecule type" value="Genomic_DNA"/>
</dbReference>
<dbReference type="RefSeq" id="WP_011234756.1">
    <property type="nucleotide sequence ID" value="NC_006512.1"/>
</dbReference>
<dbReference type="SMR" id="Q5QU36"/>
<dbReference type="STRING" id="283942.IL1513"/>
<dbReference type="GeneID" id="41336690"/>
<dbReference type="KEGG" id="ilo:IL1513"/>
<dbReference type="eggNOG" id="COG1132">
    <property type="taxonomic scope" value="Bacteria"/>
</dbReference>
<dbReference type="HOGENOM" id="CLU_000604_84_5_6"/>
<dbReference type="OrthoDB" id="9782586at2"/>
<dbReference type="Proteomes" id="UP000001171">
    <property type="component" value="Chromosome"/>
</dbReference>
<dbReference type="GO" id="GO:0005886">
    <property type="term" value="C:plasma membrane"/>
    <property type="evidence" value="ECO:0007669"/>
    <property type="project" value="UniProtKB-SubCell"/>
</dbReference>
<dbReference type="GO" id="GO:0015421">
    <property type="term" value="F:ABC-type oligopeptide transporter activity"/>
    <property type="evidence" value="ECO:0007669"/>
    <property type="project" value="TreeGrafter"/>
</dbReference>
<dbReference type="GO" id="GO:0005524">
    <property type="term" value="F:ATP binding"/>
    <property type="evidence" value="ECO:0007669"/>
    <property type="project" value="UniProtKB-KW"/>
</dbReference>
<dbReference type="GO" id="GO:0016887">
    <property type="term" value="F:ATP hydrolysis activity"/>
    <property type="evidence" value="ECO:0007669"/>
    <property type="project" value="InterPro"/>
</dbReference>
<dbReference type="GO" id="GO:0034040">
    <property type="term" value="F:ATPase-coupled lipid transmembrane transporter activity"/>
    <property type="evidence" value="ECO:0007669"/>
    <property type="project" value="InterPro"/>
</dbReference>
<dbReference type="CDD" id="cd18552">
    <property type="entry name" value="ABC_6TM_MsbA_like"/>
    <property type="match status" value="1"/>
</dbReference>
<dbReference type="CDD" id="cd03251">
    <property type="entry name" value="ABCC_MsbA"/>
    <property type="match status" value="1"/>
</dbReference>
<dbReference type="FunFam" id="3.40.50.300:FF:000140">
    <property type="entry name" value="Lipid A export ATP-binding/permease protein MsbA"/>
    <property type="match status" value="1"/>
</dbReference>
<dbReference type="Gene3D" id="1.20.1560.10">
    <property type="entry name" value="ABC transporter type 1, transmembrane domain"/>
    <property type="match status" value="1"/>
</dbReference>
<dbReference type="Gene3D" id="3.40.50.300">
    <property type="entry name" value="P-loop containing nucleotide triphosphate hydrolases"/>
    <property type="match status" value="1"/>
</dbReference>
<dbReference type="InterPro" id="IPR003593">
    <property type="entry name" value="AAA+_ATPase"/>
</dbReference>
<dbReference type="InterPro" id="IPR011527">
    <property type="entry name" value="ABC1_TM_dom"/>
</dbReference>
<dbReference type="InterPro" id="IPR036640">
    <property type="entry name" value="ABC1_TM_sf"/>
</dbReference>
<dbReference type="InterPro" id="IPR003439">
    <property type="entry name" value="ABC_transporter-like_ATP-bd"/>
</dbReference>
<dbReference type="InterPro" id="IPR017871">
    <property type="entry name" value="ABC_transporter-like_CS"/>
</dbReference>
<dbReference type="InterPro" id="IPR011917">
    <property type="entry name" value="ABC_transpr_lipidA"/>
</dbReference>
<dbReference type="InterPro" id="IPR027417">
    <property type="entry name" value="P-loop_NTPase"/>
</dbReference>
<dbReference type="InterPro" id="IPR039421">
    <property type="entry name" value="Type_1_exporter"/>
</dbReference>
<dbReference type="NCBIfam" id="TIGR02203">
    <property type="entry name" value="MsbA_lipidA"/>
    <property type="match status" value="1"/>
</dbReference>
<dbReference type="PANTHER" id="PTHR43394:SF1">
    <property type="entry name" value="ATP-BINDING CASSETTE SUB-FAMILY B MEMBER 10, MITOCHONDRIAL"/>
    <property type="match status" value="1"/>
</dbReference>
<dbReference type="PANTHER" id="PTHR43394">
    <property type="entry name" value="ATP-DEPENDENT PERMEASE MDL1, MITOCHONDRIAL"/>
    <property type="match status" value="1"/>
</dbReference>
<dbReference type="Pfam" id="PF00664">
    <property type="entry name" value="ABC_membrane"/>
    <property type="match status" value="1"/>
</dbReference>
<dbReference type="Pfam" id="PF00005">
    <property type="entry name" value="ABC_tran"/>
    <property type="match status" value="1"/>
</dbReference>
<dbReference type="SMART" id="SM00382">
    <property type="entry name" value="AAA"/>
    <property type="match status" value="1"/>
</dbReference>
<dbReference type="SUPFAM" id="SSF90123">
    <property type="entry name" value="ABC transporter transmembrane region"/>
    <property type="match status" value="1"/>
</dbReference>
<dbReference type="SUPFAM" id="SSF52540">
    <property type="entry name" value="P-loop containing nucleoside triphosphate hydrolases"/>
    <property type="match status" value="1"/>
</dbReference>
<dbReference type="PROSITE" id="PS50929">
    <property type="entry name" value="ABC_TM1F"/>
    <property type="match status" value="1"/>
</dbReference>
<dbReference type="PROSITE" id="PS00211">
    <property type="entry name" value="ABC_TRANSPORTER_1"/>
    <property type="match status" value="1"/>
</dbReference>
<dbReference type="PROSITE" id="PS50893">
    <property type="entry name" value="ABC_TRANSPORTER_2"/>
    <property type="match status" value="1"/>
</dbReference>
<dbReference type="PROSITE" id="PS51239">
    <property type="entry name" value="MSBA"/>
    <property type="match status" value="1"/>
</dbReference>
<gene>
    <name evidence="1" type="primary">msbA</name>
    <name type="ordered locus">IL1513</name>
</gene>
<accession>Q5QU36</accession>
<sequence>MDSQLKKKTTFKRLLGYIKPYKAAFIAAILCMIGYSAIDTLFLSQIETLIDDGLTEQDSNILLYGALFVPFIFILRGSLNVASSYFLHWVGFKVVTKMRQQLFDHMMKLPVGFHDQHSTGDLISKITYDTQQVAEASSRAVLVLVKEGAFVAGLLGLMFYQSWQLSLVFLVIGPLVAKVVGVVSRRFRKVSSRIQTAMGNVTTTAEQMINGHKVVIMHQGQKGESTRFSEINNITRNQNMKLVNTRAISTSVIQFIASLSLSMVLVIASFPEMLGELSAGAFTTLLTAMIMLLRPLKQLTNVNSDFQRGIAAATSVFAILDEPIEVDKGSRVVDRAAGDIVFDDVTFSYQKDDEPALEHINFKVDQGKTVALVGRSGSGKSTISNLLTRFYDVEQGSILLDGHNINDYKLKCLRRQFALVSQHVTLFNDTIANNIAYGASKDVSRENIIKAAEQAYVTEFTDSMPKGLDTMVGENGVMLSGGQRQRIAIARALLQDAPILILDEATSALDTESERHIQDALGTLRKNRTAIVIAHRLSTIENADEILVMDNGEIIERGTHQQLLDQEGAYFQLHNLQFSGSA</sequence>
<comment type="function">
    <text evidence="1">Involved in lipopolysaccharide (LPS) biosynthesis. Translocates lipid A-core from the inner to the outer leaflet of the inner membrane. Transmembrane domains (TMD) form a pore in the inner membrane and the ATP-binding domain (NBD) is responsible for energy generation.</text>
</comment>
<comment type="catalytic activity">
    <reaction evidence="1">
        <text>ATP + H2O + lipid A-core oligosaccharideSide 1 = ADP + phosphate + lipid A-core oligosaccharideSide 2.</text>
        <dbReference type="EC" id="7.5.2.6"/>
    </reaction>
</comment>
<comment type="subunit">
    <text evidence="1">Homodimer.</text>
</comment>
<comment type="subcellular location">
    <subcellularLocation>
        <location evidence="1">Cell inner membrane</location>
        <topology evidence="1">Multi-pass membrane protein</topology>
    </subcellularLocation>
</comment>
<comment type="domain">
    <text evidence="1">In MsbA the ATP-binding domain (NBD) and the transmembrane domain (TMD) are fused.</text>
</comment>
<comment type="similarity">
    <text evidence="1">Belongs to the ABC transporter superfamily. Lipid exporter (TC 3.A.1.106) family.</text>
</comment>
<feature type="chain" id="PRO_0000271632" description="ATP-dependent lipid A-core flippase">
    <location>
        <begin position="1"/>
        <end position="582"/>
    </location>
</feature>
<feature type="transmembrane region" description="Helical" evidence="1">
    <location>
        <begin position="23"/>
        <end position="43"/>
    </location>
</feature>
<feature type="transmembrane region" description="Helical" evidence="1">
    <location>
        <begin position="61"/>
        <end position="81"/>
    </location>
</feature>
<feature type="transmembrane region" description="Helical" evidence="1">
    <location>
        <begin position="140"/>
        <end position="160"/>
    </location>
</feature>
<feature type="transmembrane region" description="Helical" evidence="1">
    <location>
        <begin position="163"/>
        <end position="183"/>
    </location>
</feature>
<feature type="transmembrane region" description="Helical" evidence="1">
    <location>
        <begin position="247"/>
        <end position="267"/>
    </location>
</feature>
<feature type="transmembrane region" description="Helical" evidence="1">
    <location>
        <begin position="273"/>
        <end position="293"/>
    </location>
</feature>
<feature type="domain" description="ABC transmembrane type-1" evidence="1">
    <location>
        <begin position="26"/>
        <end position="308"/>
    </location>
</feature>
<feature type="domain" description="ABC transporter" evidence="1">
    <location>
        <begin position="340"/>
        <end position="576"/>
    </location>
</feature>
<feature type="binding site" evidence="1">
    <location>
        <begin position="374"/>
        <end position="381"/>
    </location>
    <ligand>
        <name>ATP</name>
        <dbReference type="ChEBI" id="CHEBI:30616"/>
    </ligand>
</feature>
<name>MSBA_IDILO</name>
<organism>
    <name type="scientific">Idiomarina loihiensis (strain ATCC BAA-735 / DSM 15497 / L2-TR)</name>
    <dbReference type="NCBI Taxonomy" id="283942"/>
    <lineage>
        <taxon>Bacteria</taxon>
        <taxon>Pseudomonadati</taxon>
        <taxon>Pseudomonadota</taxon>
        <taxon>Gammaproteobacteria</taxon>
        <taxon>Alteromonadales</taxon>
        <taxon>Idiomarinaceae</taxon>
        <taxon>Idiomarina</taxon>
    </lineage>
</organism>
<reference key="1">
    <citation type="journal article" date="2004" name="Proc. Natl. Acad. Sci. U.S.A.">
        <title>Genome sequence of the deep-sea gamma-proteobacterium Idiomarina loihiensis reveals amino acid fermentation as a source of carbon and energy.</title>
        <authorList>
            <person name="Hou S."/>
            <person name="Saw J.H."/>
            <person name="Lee K.S."/>
            <person name="Freitas T.A."/>
            <person name="Belisle C."/>
            <person name="Kawarabayasi Y."/>
            <person name="Donachie S.P."/>
            <person name="Pikina A."/>
            <person name="Galperin M.Y."/>
            <person name="Koonin E.V."/>
            <person name="Makarova K.S."/>
            <person name="Omelchenko M.V."/>
            <person name="Sorokin A."/>
            <person name="Wolf Y.I."/>
            <person name="Li Q.X."/>
            <person name="Keum Y.S."/>
            <person name="Campbell S."/>
            <person name="Denery J."/>
            <person name="Aizawa S."/>
            <person name="Shibata S."/>
            <person name="Malahoff A."/>
            <person name="Alam M."/>
        </authorList>
    </citation>
    <scope>NUCLEOTIDE SEQUENCE [LARGE SCALE GENOMIC DNA]</scope>
    <source>
        <strain>ATCC BAA-735 / DSM 15497 / L2-TR</strain>
    </source>
</reference>
<keyword id="KW-0067">ATP-binding</keyword>
<keyword id="KW-0997">Cell inner membrane</keyword>
<keyword id="KW-1003">Cell membrane</keyword>
<keyword id="KW-0445">Lipid transport</keyword>
<keyword id="KW-0472">Membrane</keyword>
<keyword id="KW-0547">Nucleotide-binding</keyword>
<keyword id="KW-1185">Reference proteome</keyword>
<keyword id="KW-1278">Translocase</keyword>
<keyword id="KW-0812">Transmembrane</keyword>
<keyword id="KW-1133">Transmembrane helix</keyword>
<keyword id="KW-0813">Transport</keyword>
<proteinExistence type="inferred from homology"/>
<protein>
    <recommendedName>
        <fullName evidence="1">ATP-dependent lipid A-core flippase</fullName>
        <ecNumber evidence="1">7.5.2.6</ecNumber>
    </recommendedName>
    <alternativeName>
        <fullName evidence="1">Lipid A export ATP-binding/permease protein MsbA</fullName>
    </alternativeName>
</protein>